<evidence type="ECO:0000250" key="1"/>
<evidence type="ECO:0000255" key="2">
    <source>
        <dbReference type="PROSITE-ProRule" id="PRU01210"/>
    </source>
</evidence>
<evidence type="ECO:0000269" key="3">
    <source>
    </source>
</evidence>
<evidence type="ECO:0000305" key="4"/>
<reference key="1">
    <citation type="journal article" date="2009" name="Biochimie">
        <title>Molecular cloning and nucleotide sequence analysis of genes from a cDNA library of the scorpion Tityus discrepans.</title>
        <authorList>
            <person name="D'Suze G."/>
            <person name="Schwartz E.F."/>
            <person name="Garcia-Gomez B.I."/>
            <person name="Sevcik C."/>
            <person name="Possani L.D."/>
        </authorList>
    </citation>
    <scope>NUCLEOTIDE SEQUENCE [MRNA]</scope>
    <scope>PROTEIN SEQUENCE OF 21-41</scope>
    <source>
        <tissue>Venom</tissue>
        <tissue>Venom gland</tissue>
    </source>
</reference>
<reference key="2">
    <citation type="journal article" date="2012" name="PLoS ONE">
        <title>Identification and phylogenetic analysis of Tityus pachyurus and Tityus obscurus novel putative Na+-channel scorpion toxins.</title>
        <authorList>
            <person name="Guerrero-Vargas J.A."/>
            <person name="Mourao C.B."/>
            <person name="Quintero-Hernandez V."/>
            <person name="Possani L.D."/>
            <person name="Schwartz E.F."/>
        </authorList>
    </citation>
    <scope>NOMENCLATURE</scope>
</reference>
<proteinExistence type="evidence at protein level"/>
<accession>C9X4J8</accession>
<dbReference type="EMBL" id="FN392276">
    <property type="protein sequence ID" value="CAY61924.1"/>
    <property type="molecule type" value="mRNA"/>
</dbReference>
<dbReference type="EMBL" id="FN392283">
    <property type="protein sequence ID" value="CAY61939.1"/>
    <property type="molecule type" value="mRNA"/>
</dbReference>
<dbReference type="SMR" id="C9X4J8"/>
<dbReference type="GO" id="GO:0005576">
    <property type="term" value="C:extracellular region"/>
    <property type="evidence" value="ECO:0007669"/>
    <property type="project" value="UniProtKB-SubCell"/>
</dbReference>
<dbReference type="GO" id="GO:0019871">
    <property type="term" value="F:sodium channel inhibitor activity"/>
    <property type="evidence" value="ECO:0007669"/>
    <property type="project" value="InterPro"/>
</dbReference>
<dbReference type="GO" id="GO:0090729">
    <property type="term" value="F:toxin activity"/>
    <property type="evidence" value="ECO:0007669"/>
    <property type="project" value="UniProtKB-KW"/>
</dbReference>
<dbReference type="CDD" id="cd23106">
    <property type="entry name" value="neurotoxins_LC_scorpion"/>
    <property type="match status" value="1"/>
</dbReference>
<dbReference type="FunFam" id="3.30.30.10:FF:000002">
    <property type="entry name" value="Alpha-like toxin BmK-M1"/>
    <property type="match status" value="1"/>
</dbReference>
<dbReference type="Gene3D" id="3.30.30.10">
    <property type="entry name" value="Knottin, scorpion toxin-like"/>
    <property type="match status" value="1"/>
</dbReference>
<dbReference type="InterPro" id="IPR044062">
    <property type="entry name" value="LCN-type_CS_alpha_beta_dom"/>
</dbReference>
<dbReference type="InterPro" id="IPR036574">
    <property type="entry name" value="Scorpion_toxin-like_sf"/>
</dbReference>
<dbReference type="InterPro" id="IPR018218">
    <property type="entry name" value="Scorpion_toxinL"/>
</dbReference>
<dbReference type="InterPro" id="IPR002061">
    <property type="entry name" value="Scorpion_toxinL/defensin"/>
</dbReference>
<dbReference type="Pfam" id="PF00537">
    <property type="entry name" value="Toxin_3"/>
    <property type="match status" value="1"/>
</dbReference>
<dbReference type="PRINTS" id="PR00285">
    <property type="entry name" value="SCORPNTOXIN"/>
</dbReference>
<dbReference type="SUPFAM" id="SSF57095">
    <property type="entry name" value="Scorpion toxin-like"/>
    <property type="match status" value="1"/>
</dbReference>
<dbReference type="PROSITE" id="PS51863">
    <property type="entry name" value="LCN_CSAB"/>
    <property type="match status" value="1"/>
</dbReference>
<name>SCNA7_TITDI</name>
<feature type="signal peptide" evidence="3">
    <location>
        <begin position="1"/>
        <end position="20"/>
    </location>
</feature>
<feature type="chain" id="PRO_5000525365" description="Toxin TdNa7">
    <location>
        <begin position="21"/>
        <end position="84"/>
    </location>
</feature>
<feature type="domain" description="LCN-type CS-alpha/beta" evidence="2">
    <location>
        <begin position="21"/>
        <end position="83"/>
    </location>
</feature>
<feature type="modified residue" description="Lysine amide" evidence="1">
    <location>
        <position position="84"/>
    </location>
</feature>
<feature type="disulfide bond" evidence="2">
    <location>
        <begin position="31"/>
        <end position="82"/>
    </location>
</feature>
<feature type="disulfide bond" evidence="2">
    <location>
        <begin position="35"/>
        <end position="57"/>
    </location>
</feature>
<feature type="disulfide bond" evidence="2">
    <location>
        <begin position="43"/>
        <end position="63"/>
    </location>
</feature>
<feature type="disulfide bond" evidence="2">
    <location>
        <begin position="47"/>
        <end position="65"/>
    </location>
</feature>
<sequence>MTRFVLFLSCFFLIGMVVECKDGYLMGPDGCKLDCLMRKGTFCAETCSLRKGKDGYCYAWLACYCYNMPDWVKTWERATNTCGKGK</sequence>
<organism>
    <name type="scientific">Tityus discrepans</name>
    <name type="common">Venezuelan scorpion</name>
    <dbReference type="NCBI Taxonomy" id="57059"/>
    <lineage>
        <taxon>Eukaryota</taxon>
        <taxon>Metazoa</taxon>
        <taxon>Ecdysozoa</taxon>
        <taxon>Arthropoda</taxon>
        <taxon>Chelicerata</taxon>
        <taxon>Arachnida</taxon>
        <taxon>Scorpiones</taxon>
        <taxon>Buthida</taxon>
        <taxon>Buthoidea</taxon>
        <taxon>Buthidae</taxon>
        <taxon>Tityus</taxon>
    </lineage>
</organism>
<keyword id="KW-0027">Amidation</keyword>
<keyword id="KW-0903">Direct protein sequencing</keyword>
<keyword id="KW-1015">Disulfide bond</keyword>
<keyword id="KW-0872">Ion channel impairing toxin</keyword>
<keyword id="KW-0528">Neurotoxin</keyword>
<keyword id="KW-0964">Secreted</keyword>
<keyword id="KW-0732">Signal</keyword>
<keyword id="KW-0800">Toxin</keyword>
<keyword id="KW-0738">Voltage-gated sodium channel impairing toxin</keyword>
<comment type="function">
    <text evidence="1">Beta toxins bind voltage-independently at site-4 of sodium channels (Nav) and shift the voltage of activation toward more negative potentials thereby affecting sodium channel activation and promoting spontaneous and repetitive firing.</text>
</comment>
<comment type="subcellular location">
    <subcellularLocation>
        <location>Secreted</location>
    </subcellularLocation>
</comment>
<comment type="tissue specificity">
    <text>Expressed by the venom gland.</text>
</comment>
<comment type="domain">
    <text evidence="4">Has the structural arrangement of an alpha-helix connected to antiparallel beta-sheets by disulfide bonds (CS-alpha/beta).</text>
</comment>
<comment type="similarity">
    <text evidence="4">Belongs to the long (4 C-C) scorpion toxin superfamily. Sodium channel inhibitor family. Beta subfamily.</text>
</comment>
<protein>
    <recommendedName>
        <fullName>Toxin TdNa7</fullName>
    </recommendedName>
    <alternativeName>
        <fullName>PT-beta* NaTx13.8</fullName>
    </alternativeName>
</protein>